<feature type="chain" id="PRO_1000002157" description="SsrA-binding protein">
    <location>
        <begin position="1"/>
        <end position="154"/>
    </location>
</feature>
<keyword id="KW-0963">Cytoplasm</keyword>
<keyword id="KW-1185">Reference proteome</keyword>
<keyword id="KW-0694">RNA-binding</keyword>
<name>SSRP_STAA8</name>
<reference key="1">
    <citation type="book" date="2006" name="Gram positive pathogens, 2nd edition">
        <title>The Staphylococcus aureus NCTC 8325 genome.</title>
        <editorList>
            <person name="Fischetti V."/>
            <person name="Novick R."/>
            <person name="Ferretti J."/>
            <person name="Portnoy D."/>
            <person name="Rood J."/>
        </editorList>
        <authorList>
            <person name="Gillaspy A.F."/>
            <person name="Worrell V."/>
            <person name="Orvis J."/>
            <person name="Roe B.A."/>
            <person name="Dyer D.W."/>
            <person name="Iandolo J.J."/>
        </authorList>
    </citation>
    <scope>NUCLEOTIDE SEQUENCE [LARGE SCALE GENOMIC DNA]</scope>
    <source>
        <strain>NCTC 8325 / PS 47</strain>
    </source>
</reference>
<gene>
    <name evidence="1" type="primary">smpB</name>
    <name type="ordered locus">SAOUHSC_00804</name>
</gene>
<organism>
    <name type="scientific">Staphylococcus aureus (strain NCTC 8325 / PS 47)</name>
    <dbReference type="NCBI Taxonomy" id="93061"/>
    <lineage>
        <taxon>Bacteria</taxon>
        <taxon>Bacillati</taxon>
        <taxon>Bacillota</taxon>
        <taxon>Bacilli</taxon>
        <taxon>Bacillales</taxon>
        <taxon>Staphylococcaceae</taxon>
        <taxon>Staphylococcus</taxon>
    </lineage>
</organism>
<sequence length="154" mass="17756">MAKKKSPGTLAENRKARHDYNIEDTIEAGIVLQGTEIKSIRRGSANLKDSYAQVKNGEMYLNNMHIAPYEEGNRFNHDPLRSRKLLLHKREIIKLGDQTREIGYSIVPLKLYLKHGHCKVLLGVARGKKKYDKRQALKEKAVKRDVARDMKARY</sequence>
<proteinExistence type="inferred from homology"/>
<protein>
    <recommendedName>
        <fullName evidence="1">SsrA-binding protein</fullName>
    </recommendedName>
    <alternativeName>
        <fullName evidence="1">Small protein B</fullName>
    </alternativeName>
</protein>
<accession>Q2G023</accession>
<comment type="function">
    <text evidence="1">Required for rescue of stalled ribosomes mediated by trans-translation. Binds to transfer-messenger RNA (tmRNA), required for stable association of tmRNA with ribosomes. tmRNA and SmpB together mimic tRNA shape, replacing the anticodon stem-loop with SmpB. tmRNA is encoded by the ssrA gene; the 2 termini fold to resemble tRNA(Ala) and it encodes a 'tag peptide', a short internal open reading frame. During trans-translation Ala-aminoacylated tmRNA acts like a tRNA, entering the A-site of stalled ribosomes, displacing the stalled mRNA. The ribosome then switches to translate the ORF on the tmRNA; the nascent peptide is terminated with the 'tag peptide' encoded by the tmRNA and targeted for degradation. The ribosome is freed to recommence translation, which seems to be the essential function of trans-translation.</text>
</comment>
<comment type="subcellular location">
    <subcellularLocation>
        <location evidence="1">Cytoplasm</location>
    </subcellularLocation>
    <text evidence="1">The tmRNA-SmpB complex associates with stalled 70S ribosomes.</text>
</comment>
<comment type="similarity">
    <text evidence="1">Belongs to the SmpB family.</text>
</comment>
<evidence type="ECO:0000255" key="1">
    <source>
        <dbReference type="HAMAP-Rule" id="MF_00023"/>
    </source>
</evidence>
<dbReference type="EMBL" id="CP000253">
    <property type="protein sequence ID" value="ABD29932.1"/>
    <property type="molecule type" value="Genomic_DNA"/>
</dbReference>
<dbReference type="RefSeq" id="WP_001085185.1">
    <property type="nucleotide sequence ID" value="NZ_LS483365.1"/>
</dbReference>
<dbReference type="RefSeq" id="YP_499360.1">
    <property type="nucleotide sequence ID" value="NC_007795.1"/>
</dbReference>
<dbReference type="SMR" id="Q2G023"/>
<dbReference type="STRING" id="93061.SAOUHSC_00804"/>
<dbReference type="PaxDb" id="1280-SAXN108_0849"/>
<dbReference type="GeneID" id="3919367"/>
<dbReference type="KEGG" id="sao:SAOUHSC_00804"/>
<dbReference type="PATRIC" id="fig|93061.5.peg.728"/>
<dbReference type="eggNOG" id="COG0691">
    <property type="taxonomic scope" value="Bacteria"/>
</dbReference>
<dbReference type="HOGENOM" id="CLU_108953_0_0_9"/>
<dbReference type="OrthoDB" id="9805462at2"/>
<dbReference type="PRO" id="PR:Q2G023"/>
<dbReference type="Proteomes" id="UP000008816">
    <property type="component" value="Chromosome"/>
</dbReference>
<dbReference type="GO" id="GO:0005829">
    <property type="term" value="C:cytosol"/>
    <property type="evidence" value="ECO:0000318"/>
    <property type="project" value="GO_Central"/>
</dbReference>
<dbReference type="GO" id="GO:0003723">
    <property type="term" value="F:RNA binding"/>
    <property type="evidence" value="ECO:0000318"/>
    <property type="project" value="GO_Central"/>
</dbReference>
<dbReference type="GO" id="GO:0070929">
    <property type="term" value="P:trans-translation"/>
    <property type="evidence" value="ECO:0007669"/>
    <property type="project" value="UniProtKB-UniRule"/>
</dbReference>
<dbReference type="CDD" id="cd09294">
    <property type="entry name" value="SmpB"/>
    <property type="match status" value="1"/>
</dbReference>
<dbReference type="Gene3D" id="2.40.280.10">
    <property type="match status" value="1"/>
</dbReference>
<dbReference type="HAMAP" id="MF_00023">
    <property type="entry name" value="SmpB"/>
    <property type="match status" value="1"/>
</dbReference>
<dbReference type="InterPro" id="IPR023620">
    <property type="entry name" value="SmpB"/>
</dbReference>
<dbReference type="InterPro" id="IPR000037">
    <property type="entry name" value="SsrA-bd_prot"/>
</dbReference>
<dbReference type="InterPro" id="IPR020081">
    <property type="entry name" value="SsrA-bd_prot_CS"/>
</dbReference>
<dbReference type="NCBIfam" id="NF003843">
    <property type="entry name" value="PRK05422.1"/>
    <property type="match status" value="1"/>
</dbReference>
<dbReference type="NCBIfam" id="TIGR00086">
    <property type="entry name" value="smpB"/>
    <property type="match status" value="1"/>
</dbReference>
<dbReference type="PANTHER" id="PTHR30308:SF2">
    <property type="entry name" value="SSRA-BINDING PROTEIN"/>
    <property type="match status" value="1"/>
</dbReference>
<dbReference type="PANTHER" id="PTHR30308">
    <property type="entry name" value="TMRNA-BINDING COMPONENT OF TRANS-TRANSLATION TAGGING COMPLEX"/>
    <property type="match status" value="1"/>
</dbReference>
<dbReference type="Pfam" id="PF01668">
    <property type="entry name" value="SmpB"/>
    <property type="match status" value="1"/>
</dbReference>
<dbReference type="SUPFAM" id="SSF74982">
    <property type="entry name" value="Small protein B (SmpB)"/>
    <property type="match status" value="1"/>
</dbReference>
<dbReference type="PROSITE" id="PS01317">
    <property type="entry name" value="SSRP"/>
    <property type="match status" value="1"/>
</dbReference>